<comment type="function">
    <text evidence="1">Responsible for synthesis of pseudouridine from uracil-13 in transfer RNAs.</text>
</comment>
<comment type="catalytic activity">
    <reaction evidence="1">
        <text>uridine(13) in tRNA = pseudouridine(13) in tRNA</text>
        <dbReference type="Rhea" id="RHEA:42540"/>
        <dbReference type="Rhea" id="RHEA-COMP:10105"/>
        <dbReference type="Rhea" id="RHEA-COMP:10106"/>
        <dbReference type="ChEBI" id="CHEBI:65314"/>
        <dbReference type="ChEBI" id="CHEBI:65315"/>
        <dbReference type="EC" id="5.4.99.27"/>
    </reaction>
</comment>
<comment type="similarity">
    <text evidence="1">Belongs to the pseudouridine synthase TruD family.</text>
</comment>
<gene>
    <name evidence="1" type="primary">truD</name>
    <name type="ordered locus">SBO_2775</name>
</gene>
<sequence length="349" mass="39057">MIEFDNLTYLHGKPQGTGLLKANPEDFVVVEDLGFEPDGEGEHILVRILKNGCNTRFVADALAKFLKIHAREVSFAGQKDKHAVTEQWLCARVPGKEMPDLSAFQLEGCQVLEYARHKRKLRLGALKGNAFTLVLREVSNRDDVEQRLIDICVKGVPNYFGAQRFGIGGSNLQGALRWAQTNTPVRDRNKRSFWLSAARSALFNQIVAERLKKADVNQVVDGDALQLAGRGSWFVATTEELAELQHRVNDKELMITAALPGSGEWGTQRKALAFEQAAVAAETELQALLVREKVEAARRAMLLYPQQLSWNWWDDVTVEIRFWLPAGSFATSVVRELINTTGDYAHIAE</sequence>
<organism>
    <name type="scientific">Shigella boydii serotype 4 (strain Sb227)</name>
    <dbReference type="NCBI Taxonomy" id="300268"/>
    <lineage>
        <taxon>Bacteria</taxon>
        <taxon>Pseudomonadati</taxon>
        <taxon>Pseudomonadota</taxon>
        <taxon>Gammaproteobacteria</taxon>
        <taxon>Enterobacterales</taxon>
        <taxon>Enterobacteriaceae</taxon>
        <taxon>Shigella</taxon>
    </lineage>
</organism>
<reference key="1">
    <citation type="journal article" date="2005" name="Nucleic Acids Res.">
        <title>Genome dynamics and diversity of Shigella species, the etiologic agents of bacillary dysentery.</title>
        <authorList>
            <person name="Yang F."/>
            <person name="Yang J."/>
            <person name="Zhang X."/>
            <person name="Chen L."/>
            <person name="Jiang Y."/>
            <person name="Yan Y."/>
            <person name="Tang X."/>
            <person name="Wang J."/>
            <person name="Xiong Z."/>
            <person name="Dong J."/>
            <person name="Xue Y."/>
            <person name="Zhu Y."/>
            <person name="Xu X."/>
            <person name="Sun L."/>
            <person name="Chen S."/>
            <person name="Nie H."/>
            <person name="Peng J."/>
            <person name="Xu J."/>
            <person name="Wang Y."/>
            <person name="Yuan Z."/>
            <person name="Wen Y."/>
            <person name="Yao Z."/>
            <person name="Shen Y."/>
            <person name="Qiang B."/>
            <person name="Hou Y."/>
            <person name="Yu J."/>
            <person name="Jin Q."/>
        </authorList>
    </citation>
    <scope>NUCLEOTIDE SEQUENCE [LARGE SCALE GENOMIC DNA]</scope>
    <source>
        <strain>Sb227</strain>
    </source>
</reference>
<protein>
    <recommendedName>
        <fullName evidence="1">tRNA pseudouridine synthase D</fullName>
        <ecNumber evidence="1">5.4.99.27</ecNumber>
    </recommendedName>
    <alternativeName>
        <fullName evidence="1">tRNA pseudouridine(13) synthase</fullName>
    </alternativeName>
    <alternativeName>
        <fullName evidence="1">tRNA pseudouridylate synthase D</fullName>
    </alternativeName>
    <alternativeName>
        <fullName evidence="1">tRNA-uridine isomerase D</fullName>
    </alternativeName>
</protein>
<keyword id="KW-0413">Isomerase</keyword>
<keyword id="KW-0819">tRNA processing</keyword>
<feature type="chain" id="PRO_0000230151" description="tRNA pseudouridine synthase D">
    <location>
        <begin position="1"/>
        <end position="349"/>
    </location>
</feature>
<feature type="domain" description="TRUD" evidence="1">
    <location>
        <begin position="155"/>
        <end position="303"/>
    </location>
</feature>
<feature type="active site" description="Nucleophile" evidence="1">
    <location>
        <position position="80"/>
    </location>
</feature>
<feature type="binding site" evidence="1">
    <location>
        <position position="27"/>
    </location>
    <ligand>
        <name>substrate</name>
    </ligand>
</feature>
<feature type="binding site" evidence="1">
    <location>
        <position position="129"/>
    </location>
    <ligand>
        <name>substrate</name>
    </ligand>
</feature>
<feature type="binding site" evidence="1">
    <location>
        <position position="329"/>
    </location>
    <ligand>
        <name>substrate</name>
    </ligand>
</feature>
<accession>Q31XA7</accession>
<evidence type="ECO:0000255" key="1">
    <source>
        <dbReference type="HAMAP-Rule" id="MF_01082"/>
    </source>
</evidence>
<dbReference type="EC" id="5.4.99.27" evidence="1"/>
<dbReference type="EMBL" id="CP000036">
    <property type="protein sequence ID" value="ABB67301.1"/>
    <property type="molecule type" value="Genomic_DNA"/>
</dbReference>
<dbReference type="RefSeq" id="WP_000568919.1">
    <property type="nucleotide sequence ID" value="NC_007613.1"/>
</dbReference>
<dbReference type="SMR" id="Q31XA7"/>
<dbReference type="KEGG" id="sbo:SBO_2775"/>
<dbReference type="HOGENOM" id="CLU_005281_4_0_6"/>
<dbReference type="Proteomes" id="UP000007067">
    <property type="component" value="Chromosome"/>
</dbReference>
<dbReference type="GO" id="GO:0005829">
    <property type="term" value="C:cytosol"/>
    <property type="evidence" value="ECO:0007669"/>
    <property type="project" value="TreeGrafter"/>
</dbReference>
<dbReference type="GO" id="GO:0003723">
    <property type="term" value="F:RNA binding"/>
    <property type="evidence" value="ECO:0007669"/>
    <property type="project" value="InterPro"/>
</dbReference>
<dbReference type="GO" id="GO:0160150">
    <property type="term" value="F:tRNA pseudouridine(13) synthase activity"/>
    <property type="evidence" value="ECO:0007669"/>
    <property type="project" value="UniProtKB-EC"/>
</dbReference>
<dbReference type="GO" id="GO:0031119">
    <property type="term" value="P:tRNA pseudouridine synthesis"/>
    <property type="evidence" value="ECO:0007669"/>
    <property type="project" value="UniProtKB-UniRule"/>
</dbReference>
<dbReference type="CDD" id="cd02575">
    <property type="entry name" value="PseudoU_synth_EcTruD"/>
    <property type="match status" value="1"/>
</dbReference>
<dbReference type="FunFam" id="3.30.2340.10:FF:000001">
    <property type="entry name" value="tRNA pseudouridine synthase D"/>
    <property type="match status" value="1"/>
</dbReference>
<dbReference type="FunFam" id="3.30.2350.20:FF:000001">
    <property type="entry name" value="tRNA pseudouridine synthase D"/>
    <property type="match status" value="1"/>
</dbReference>
<dbReference type="Gene3D" id="3.30.2350.20">
    <property type="entry name" value="TruD, catalytic domain"/>
    <property type="match status" value="1"/>
</dbReference>
<dbReference type="Gene3D" id="3.30.2340.10">
    <property type="entry name" value="TruD, insertion domain"/>
    <property type="match status" value="1"/>
</dbReference>
<dbReference type="HAMAP" id="MF_01082">
    <property type="entry name" value="TruD"/>
    <property type="match status" value="1"/>
</dbReference>
<dbReference type="InterPro" id="IPR020103">
    <property type="entry name" value="PsdUridine_synth_cat_dom_sf"/>
</dbReference>
<dbReference type="InterPro" id="IPR001656">
    <property type="entry name" value="PsdUridine_synth_TruD"/>
</dbReference>
<dbReference type="InterPro" id="IPR020119">
    <property type="entry name" value="PsdUridine_synth_TruD_CS"/>
</dbReference>
<dbReference type="InterPro" id="IPR011760">
    <property type="entry name" value="PsdUridine_synth_TruD_insert"/>
</dbReference>
<dbReference type="InterPro" id="IPR042214">
    <property type="entry name" value="TruD_catalytic"/>
</dbReference>
<dbReference type="InterPro" id="IPR043165">
    <property type="entry name" value="TruD_insert_sf"/>
</dbReference>
<dbReference type="InterPro" id="IPR050170">
    <property type="entry name" value="TruD_pseudoU_synthase"/>
</dbReference>
<dbReference type="NCBIfam" id="NF002155">
    <property type="entry name" value="PRK00984.1-4"/>
    <property type="match status" value="1"/>
</dbReference>
<dbReference type="NCBIfam" id="TIGR00094">
    <property type="entry name" value="tRNA_TruD_broad"/>
    <property type="match status" value="1"/>
</dbReference>
<dbReference type="PANTHER" id="PTHR47811">
    <property type="entry name" value="TRNA PSEUDOURIDINE SYNTHASE D"/>
    <property type="match status" value="1"/>
</dbReference>
<dbReference type="PANTHER" id="PTHR47811:SF1">
    <property type="entry name" value="TRNA PSEUDOURIDINE SYNTHASE D"/>
    <property type="match status" value="1"/>
</dbReference>
<dbReference type="Pfam" id="PF01142">
    <property type="entry name" value="TruD"/>
    <property type="match status" value="2"/>
</dbReference>
<dbReference type="SUPFAM" id="SSF55120">
    <property type="entry name" value="Pseudouridine synthase"/>
    <property type="match status" value="1"/>
</dbReference>
<dbReference type="PROSITE" id="PS50984">
    <property type="entry name" value="TRUD"/>
    <property type="match status" value="1"/>
</dbReference>
<dbReference type="PROSITE" id="PS01268">
    <property type="entry name" value="UPF0024"/>
    <property type="match status" value="1"/>
</dbReference>
<name>TRUD_SHIBS</name>
<proteinExistence type="inferred from homology"/>